<evidence type="ECO:0000255" key="1">
    <source>
        <dbReference type="HAMAP-Rule" id="MF_03115"/>
    </source>
</evidence>
<evidence type="ECO:0000256" key="2">
    <source>
        <dbReference type="SAM" id="MobiDB-lite"/>
    </source>
</evidence>
<evidence type="ECO:0000305" key="3"/>
<feature type="chain" id="PRO_0000392305" description="Anamorsin-B">
    <location>
        <begin position="1"/>
        <end position="313"/>
    </location>
</feature>
<feature type="region of interest" description="N-terminal SAM-like domain" evidence="1">
    <location>
        <begin position="6"/>
        <end position="170"/>
    </location>
</feature>
<feature type="region of interest" description="Disordered" evidence="2">
    <location>
        <begin position="162"/>
        <end position="190"/>
    </location>
</feature>
<feature type="region of interest" description="Linker" evidence="1">
    <location>
        <begin position="171"/>
        <end position="223"/>
    </location>
</feature>
<feature type="region of interest" description="Fe-S binding site A" evidence="1">
    <location>
        <begin position="236"/>
        <end position="252"/>
    </location>
</feature>
<feature type="region of interest" description="Fe-S binding site B" evidence="1">
    <location>
        <begin position="275"/>
        <end position="289"/>
    </location>
</feature>
<feature type="short sequence motif" description="Cx2C motif 1" evidence="1">
    <location>
        <begin position="275"/>
        <end position="278"/>
    </location>
</feature>
<feature type="short sequence motif" description="Cx2C motif 2" evidence="1">
    <location>
        <begin position="286"/>
        <end position="289"/>
    </location>
</feature>
<feature type="binding site" evidence="1">
    <location>
        <position position="236"/>
    </location>
    <ligand>
        <name>[2Fe-2S] cluster</name>
        <dbReference type="ChEBI" id="CHEBI:190135"/>
    </ligand>
</feature>
<feature type="binding site" evidence="1">
    <location>
        <position position="247"/>
    </location>
    <ligand>
        <name>[2Fe-2S] cluster</name>
        <dbReference type="ChEBI" id="CHEBI:190135"/>
    </ligand>
</feature>
<feature type="binding site" evidence="1">
    <location>
        <position position="250"/>
    </location>
    <ligand>
        <name>[2Fe-2S] cluster</name>
        <dbReference type="ChEBI" id="CHEBI:190135"/>
    </ligand>
</feature>
<feature type="binding site" evidence="1">
    <location>
        <position position="252"/>
    </location>
    <ligand>
        <name>[2Fe-2S] cluster</name>
        <dbReference type="ChEBI" id="CHEBI:190135"/>
    </ligand>
</feature>
<feature type="binding site" evidence="1">
    <location>
        <position position="275"/>
    </location>
    <ligand>
        <name>[4Fe-4S] cluster</name>
        <dbReference type="ChEBI" id="CHEBI:49883"/>
    </ligand>
</feature>
<feature type="binding site" evidence="1">
    <location>
        <position position="278"/>
    </location>
    <ligand>
        <name>[4Fe-4S] cluster</name>
        <dbReference type="ChEBI" id="CHEBI:49883"/>
    </ligand>
</feature>
<feature type="binding site" evidence="1">
    <location>
        <position position="286"/>
    </location>
    <ligand>
        <name>[4Fe-4S] cluster</name>
        <dbReference type="ChEBI" id="CHEBI:49883"/>
    </ligand>
</feature>
<feature type="binding site" evidence="1">
    <location>
        <position position="289"/>
    </location>
    <ligand>
        <name>[4Fe-4S] cluster</name>
        <dbReference type="ChEBI" id="CHEBI:49883"/>
    </ligand>
</feature>
<gene>
    <name evidence="1" type="primary">ciapin1-B</name>
    <name type="synonym">ciapin1-2</name>
</gene>
<dbReference type="EMBL" id="BT044871">
    <property type="protein sequence ID" value="ACI33133.1"/>
    <property type="molecule type" value="mRNA"/>
</dbReference>
<dbReference type="EMBL" id="BT058558">
    <property type="protein sequence ID" value="ACN10271.1"/>
    <property type="molecule type" value="mRNA"/>
</dbReference>
<dbReference type="EMBL" id="BT060267">
    <property type="protein sequence ID" value="ACN12627.1"/>
    <property type="molecule type" value="mRNA"/>
</dbReference>
<dbReference type="EMBL" id="BT059667">
    <property type="protein sequence ID" value="ACN11380.1"/>
    <property type="status" value="ALT_INIT"/>
    <property type="molecule type" value="mRNA"/>
</dbReference>
<dbReference type="RefSeq" id="XP_013979811.1">
    <property type="nucleotide sequence ID" value="XM_014124336.1"/>
</dbReference>
<dbReference type="RefSeq" id="XP_013979812.1">
    <property type="nucleotide sequence ID" value="XM_014124337.1"/>
</dbReference>
<dbReference type="RefSeq" id="XP_013979813.1">
    <property type="nucleotide sequence ID" value="XM_014124338.1"/>
</dbReference>
<dbReference type="SMR" id="C0HBG1"/>
<dbReference type="STRING" id="8030.ENSSSAP00000014577"/>
<dbReference type="PaxDb" id="8030-ENSSSAP00000014577"/>
<dbReference type="GeneID" id="106560909"/>
<dbReference type="KEGG" id="sasa:106560909"/>
<dbReference type="CTD" id="106560909"/>
<dbReference type="OrthoDB" id="376579at7898"/>
<dbReference type="Proteomes" id="UP000087266">
    <property type="component" value="Chromosome ssa10"/>
</dbReference>
<dbReference type="GO" id="GO:0005758">
    <property type="term" value="C:mitochondrial intermembrane space"/>
    <property type="evidence" value="ECO:0007669"/>
    <property type="project" value="UniProtKB-SubCell"/>
</dbReference>
<dbReference type="GO" id="GO:0005634">
    <property type="term" value="C:nucleus"/>
    <property type="evidence" value="ECO:0007669"/>
    <property type="project" value="UniProtKB-SubCell"/>
</dbReference>
<dbReference type="GO" id="GO:0051537">
    <property type="term" value="F:2 iron, 2 sulfur cluster binding"/>
    <property type="evidence" value="ECO:0000250"/>
    <property type="project" value="UniProtKB"/>
</dbReference>
<dbReference type="GO" id="GO:0051539">
    <property type="term" value="F:4 iron, 4 sulfur cluster binding"/>
    <property type="evidence" value="ECO:0007669"/>
    <property type="project" value="UniProtKB-KW"/>
</dbReference>
<dbReference type="GO" id="GO:0009055">
    <property type="term" value="F:electron transfer activity"/>
    <property type="evidence" value="ECO:0007669"/>
    <property type="project" value="UniProtKB-UniRule"/>
</dbReference>
<dbReference type="GO" id="GO:0046872">
    <property type="term" value="F:metal ion binding"/>
    <property type="evidence" value="ECO:0007669"/>
    <property type="project" value="UniProtKB-KW"/>
</dbReference>
<dbReference type="GO" id="GO:0006915">
    <property type="term" value="P:apoptotic process"/>
    <property type="evidence" value="ECO:0007669"/>
    <property type="project" value="UniProtKB-KW"/>
</dbReference>
<dbReference type="GO" id="GO:0030097">
    <property type="term" value="P:hemopoiesis"/>
    <property type="evidence" value="ECO:0007669"/>
    <property type="project" value="UniProtKB-UniRule"/>
</dbReference>
<dbReference type="GO" id="GO:0016226">
    <property type="term" value="P:iron-sulfur cluster assembly"/>
    <property type="evidence" value="ECO:0007669"/>
    <property type="project" value="UniProtKB-UniRule"/>
</dbReference>
<dbReference type="GO" id="GO:0043066">
    <property type="term" value="P:negative regulation of apoptotic process"/>
    <property type="evidence" value="ECO:0007669"/>
    <property type="project" value="UniProtKB-UniRule"/>
</dbReference>
<dbReference type="FunFam" id="3.40.50.150:FF:000085">
    <property type="entry name" value="Anamorsin homolog"/>
    <property type="match status" value="1"/>
</dbReference>
<dbReference type="Gene3D" id="3.40.50.150">
    <property type="entry name" value="Vaccinia Virus protein VP39"/>
    <property type="match status" value="1"/>
</dbReference>
<dbReference type="HAMAP" id="MF_03115">
    <property type="entry name" value="Anamorsin"/>
    <property type="match status" value="1"/>
</dbReference>
<dbReference type="InterPro" id="IPR007785">
    <property type="entry name" value="Anamorsin"/>
</dbReference>
<dbReference type="InterPro" id="IPR049011">
    <property type="entry name" value="Anamorsin_N_metazoan"/>
</dbReference>
<dbReference type="InterPro" id="IPR046408">
    <property type="entry name" value="CIAPIN1"/>
</dbReference>
<dbReference type="InterPro" id="IPR029063">
    <property type="entry name" value="SAM-dependent_MTases_sf"/>
</dbReference>
<dbReference type="PANTHER" id="PTHR13273">
    <property type="entry name" value="ANAMORSIN"/>
    <property type="match status" value="1"/>
</dbReference>
<dbReference type="PANTHER" id="PTHR13273:SF14">
    <property type="entry name" value="ANAMORSIN"/>
    <property type="match status" value="1"/>
</dbReference>
<dbReference type="Pfam" id="PF20922">
    <property type="entry name" value="Anamorsin_N"/>
    <property type="match status" value="1"/>
</dbReference>
<dbReference type="Pfam" id="PF05093">
    <property type="entry name" value="CIAPIN1"/>
    <property type="match status" value="2"/>
</dbReference>
<dbReference type="SUPFAM" id="SSF53335">
    <property type="entry name" value="S-adenosyl-L-methionine-dependent methyltransferases"/>
    <property type="match status" value="1"/>
</dbReference>
<organism>
    <name type="scientific">Salmo salar</name>
    <name type="common">Atlantic salmon</name>
    <dbReference type="NCBI Taxonomy" id="8030"/>
    <lineage>
        <taxon>Eukaryota</taxon>
        <taxon>Metazoa</taxon>
        <taxon>Chordata</taxon>
        <taxon>Craniata</taxon>
        <taxon>Vertebrata</taxon>
        <taxon>Euteleostomi</taxon>
        <taxon>Actinopterygii</taxon>
        <taxon>Neopterygii</taxon>
        <taxon>Teleostei</taxon>
        <taxon>Protacanthopterygii</taxon>
        <taxon>Salmoniformes</taxon>
        <taxon>Salmonidae</taxon>
        <taxon>Salmoninae</taxon>
        <taxon>Salmo</taxon>
    </lineage>
</organism>
<sequence length="313" mass="33133">MADLDVKAGDKVLLVWSQPSSPTTLKELAESLGSMVGSEGRVSLENMERLLMSSHAASTYDWVLSSLLPDSSSIHTSETLAEMARVIKPGGKLVLEEPVTGTNDQQLRTAEKLMSALKLSGLVSVTEISKGPLTPKALSALRTSTGFQGNTLSRVRMSASKPNFEVGSSSQLKLSFGKKTPKPEDKPALDPNVEKAWTLSANDMDDDDVDLVDSDALLDADDLKKPDAASLKAPSCGDGTTKKKKACKNCSCGLAEELEQESKGVQTISQPKSACGSCYLGDAFRCASCPYLGMPAFKPGEKVVLANTGLNDA</sequence>
<protein>
    <recommendedName>
        <fullName evidence="1">Anamorsin-B</fullName>
    </recommendedName>
    <alternativeName>
        <fullName evidence="1">Cytokine-induced apoptosis inhibitor 1-B</fullName>
    </alternativeName>
    <alternativeName>
        <fullName evidence="1">Fe-S cluster assembly protein DRE2 homolog B</fullName>
    </alternativeName>
</protein>
<comment type="function">
    <text evidence="1">Component of the cytosolic iron-sulfur (Fe-S) protein assembly (CIA) machinery required for the maturation of extramitochondrial Fe-S proteins. Part of an electron transfer chain functioning in an early step of cytosolic Fe-S biogenesis, facilitating the de novo assembly of a [4Fe-4S] cluster on the scaffold complex NUBP1-NUBP2. Electrons are transferred to CIAPIN1 from NADPH via the FAD- and FMN-containing protein NDOR1. NDOR1-CIAPIN1 are also required for the assembly of the diferric tyrosyl radical cofactor of ribonucleotide reductase (RNR), probably by providing electrons for reduction during radical cofactor maturation in the catalytic small subunit. Has anti-apoptotic effects in the cell. Involved in negative control of cell death upon cytokine withdrawal. Promotes development of hematopoietic cells.</text>
</comment>
<comment type="cofactor">
    <cofactor evidence="1">
        <name>[2Fe-2S] cluster</name>
        <dbReference type="ChEBI" id="CHEBI:190135"/>
    </cofactor>
</comment>
<comment type="cofactor">
    <cofactor evidence="1">
        <name>[4Fe-4S] cluster</name>
        <dbReference type="ChEBI" id="CHEBI:49883"/>
    </cofactor>
</comment>
<comment type="subunit">
    <text evidence="1">Monomer. Interacts with ndor1. Interacts with chchd4.</text>
</comment>
<comment type="subcellular location">
    <subcellularLocation>
        <location evidence="1">Cytoplasm</location>
    </subcellularLocation>
    <subcellularLocation>
        <location evidence="1">Nucleus</location>
    </subcellularLocation>
    <subcellularLocation>
        <location evidence="1">Mitochondrion intermembrane space</location>
    </subcellularLocation>
</comment>
<comment type="domain">
    <text evidence="1">The twin Cx2C motifs are involved in the recognition by the mitochondrial CHCHD4/MIA40-GFER/ERV1 disulfide relay system. The formation of 2 disulfide bonds in the Cx2C motifs through dithiol/disulfide exchange reactions effectively traps the protein in the mitochondrial intermembrane space.</text>
</comment>
<comment type="domain">
    <text evidence="1">The C-terminal domain binds 2 Fe-S clusters but is otherwise mostly in an intrinsically disordered conformation.</text>
</comment>
<comment type="domain">
    <text evidence="1">The N-terminal domain has structural similarity with S-adenosyl-L-methionine-dependent methyltransferases, but does not bind S-adenosyl-L-methionine. It is required for correct assembly of the 2 Fe-S clusters.</text>
</comment>
<comment type="similarity">
    <text evidence="1">Belongs to the anamorsin family.</text>
</comment>
<comment type="sequence caution" evidence="3">
    <conflict type="erroneous initiation">
        <sequence resource="EMBL-CDS" id="ACN11380"/>
    </conflict>
</comment>
<reference key="1">
    <citation type="journal article" date="2010" name="BMC Genomics">
        <title>Salmo salar and Esox lucius full-length cDNA sequences reveal changes in evolutionary pressures on a post-tetraploidization genome.</title>
        <authorList>
            <person name="Leong J.S."/>
            <person name="Jantzen S.G."/>
            <person name="von Schalburg K.R."/>
            <person name="Cooper G.A."/>
            <person name="Messmer A.M."/>
            <person name="Liao N.Y."/>
            <person name="Munro S."/>
            <person name="Moore R."/>
            <person name="Holt R.A."/>
            <person name="Jones S.J."/>
            <person name="Davidson W.S."/>
            <person name="Koop B.F."/>
        </authorList>
    </citation>
    <scope>NUCLEOTIDE SEQUENCE [LARGE SCALE MRNA]</scope>
    <source>
        <tissue>Brain</tissue>
    </source>
</reference>
<proteinExistence type="evidence at transcript level"/>
<keyword id="KW-0001">2Fe-2S</keyword>
<keyword id="KW-0004">4Fe-4S</keyword>
<keyword id="KW-0053">Apoptosis</keyword>
<keyword id="KW-0963">Cytoplasm</keyword>
<keyword id="KW-0408">Iron</keyword>
<keyword id="KW-0411">Iron-sulfur</keyword>
<keyword id="KW-0479">Metal-binding</keyword>
<keyword id="KW-0496">Mitochondrion</keyword>
<keyword id="KW-0539">Nucleus</keyword>
<keyword id="KW-1185">Reference proteome</keyword>
<accession>C0HBG1</accession>
<accession>B5X1F2</accession>
<name>CPN1B_SALSA</name>